<name>PNP_PROM4</name>
<accession>A9BBJ7</accession>
<gene>
    <name evidence="1" type="primary">pnp</name>
    <name type="ordered locus">P9211_12781</name>
</gene>
<reference key="1">
    <citation type="journal article" date="2007" name="PLoS Genet.">
        <title>Patterns and implications of gene gain and loss in the evolution of Prochlorococcus.</title>
        <authorList>
            <person name="Kettler G.C."/>
            <person name="Martiny A.C."/>
            <person name="Huang K."/>
            <person name="Zucker J."/>
            <person name="Coleman M.L."/>
            <person name="Rodrigue S."/>
            <person name="Chen F."/>
            <person name="Lapidus A."/>
            <person name="Ferriera S."/>
            <person name="Johnson J."/>
            <person name="Steglich C."/>
            <person name="Church G.M."/>
            <person name="Richardson P."/>
            <person name="Chisholm S.W."/>
        </authorList>
    </citation>
    <scope>NUCLEOTIDE SEQUENCE [LARGE SCALE GENOMIC DNA]</scope>
    <source>
        <strain>MIT 9211</strain>
    </source>
</reference>
<organism>
    <name type="scientific">Prochlorococcus marinus (strain MIT 9211)</name>
    <dbReference type="NCBI Taxonomy" id="93059"/>
    <lineage>
        <taxon>Bacteria</taxon>
        <taxon>Bacillati</taxon>
        <taxon>Cyanobacteriota</taxon>
        <taxon>Cyanophyceae</taxon>
        <taxon>Synechococcales</taxon>
        <taxon>Prochlorococcaceae</taxon>
        <taxon>Prochlorococcus</taxon>
    </lineage>
</organism>
<evidence type="ECO:0000255" key="1">
    <source>
        <dbReference type="HAMAP-Rule" id="MF_01595"/>
    </source>
</evidence>
<evidence type="ECO:0000256" key="2">
    <source>
        <dbReference type="SAM" id="MobiDB-lite"/>
    </source>
</evidence>
<protein>
    <recommendedName>
        <fullName evidence="1">Polyribonucleotide nucleotidyltransferase</fullName>
        <ecNumber evidence="1">2.7.7.8</ecNumber>
    </recommendedName>
    <alternativeName>
        <fullName evidence="1">Polynucleotide phosphorylase</fullName>
        <shortName evidence="1">PNPase</shortName>
    </alternativeName>
</protein>
<keyword id="KW-0963">Cytoplasm</keyword>
<keyword id="KW-0460">Magnesium</keyword>
<keyword id="KW-0479">Metal-binding</keyword>
<keyword id="KW-0548">Nucleotidyltransferase</keyword>
<keyword id="KW-1185">Reference proteome</keyword>
<keyword id="KW-0694">RNA-binding</keyword>
<keyword id="KW-0808">Transferase</keyword>
<proteinExistence type="inferred from homology"/>
<dbReference type="EC" id="2.7.7.8" evidence="1"/>
<dbReference type="EMBL" id="CP000878">
    <property type="protein sequence ID" value="ABX09209.1"/>
    <property type="molecule type" value="Genomic_DNA"/>
</dbReference>
<dbReference type="RefSeq" id="WP_012195830.1">
    <property type="nucleotide sequence ID" value="NC_009976.1"/>
</dbReference>
<dbReference type="SMR" id="A9BBJ7"/>
<dbReference type="STRING" id="93059.P9211_12781"/>
<dbReference type="KEGG" id="pmj:P9211_12781"/>
<dbReference type="eggNOG" id="COG1185">
    <property type="taxonomic scope" value="Bacteria"/>
</dbReference>
<dbReference type="HOGENOM" id="CLU_004217_2_2_3"/>
<dbReference type="OrthoDB" id="9804305at2"/>
<dbReference type="Proteomes" id="UP000000788">
    <property type="component" value="Chromosome"/>
</dbReference>
<dbReference type="GO" id="GO:0005829">
    <property type="term" value="C:cytosol"/>
    <property type="evidence" value="ECO:0007669"/>
    <property type="project" value="TreeGrafter"/>
</dbReference>
<dbReference type="GO" id="GO:0000175">
    <property type="term" value="F:3'-5'-RNA exonuclease activity"/>
    <property type="evidence" value="ECO:0007669"/>
    <property type="project" value="TreeGrafter"/>
</dbReference>
<dbReference type="GO" id="GO:0000287">
    <property type="term" value="F:magnesium ion binding"/>
    <property type="evidence" value="ECO:0007669"/>
    <property type="project" value="UniProtKB-UniRule"/>
</dbReference>
<dbReference type="GO" id="GO:0004654">
    <property type="term" value="F:polyribonucleotide nucleotidyltransferase activity"/>
    <property type="evidence" value="ECO:0007669"/>
    <property type="project" value="UniProtKB-UniRule"/>
</dbReference>
<dbReference type="GO" id="GO:0003723">
    <property type="term" value="F:RNA binding"/>
    <property type="evidence" value="ECO:0007669"/>
    <property type="project" value="UniProtKB-UniRule"/>
</dbReference>
<dbReference type="GO" id="GO:0006402">
    <property type="term" value="P:mRNA catabolic process"/>
    <property type="evidence" value="ECO:0007669"/>
    <property type="project" value="UniProtKB-UniRule"/>
</dbReference>
<dbReference type="GO" id="GO:0006396">
    <property type="term" value="P:RNA processing"/>
    <property type="evidence" value="ECO:0007669"/>
    <property type="project" value="InterPro"/>
</dbReference>
<dbReference type="CDD" id="cd02393">
    <property type="entry name" value="KH-I_PNPase"/>
    <property type="match status" value="1"/>
</dbReference>
<dbReference type="CDD" id="cd11363">
    <property type="entry name" value="RNase_PH_PNPase_1"/>
    <property type="match status" value="1"/>
</dbReference>
<dbReference type="CDD" id="cd11364">
    <property type="entry name" value="RNase_PH_PNPase_2"/>
    <property type="match status" value="1"/>
</dbReference>
<dbReference type="FunFam" id="2.40.50.140:FF:000023">
    <property type="entry name" value="Polyribonucleotide nucleotidyltransferase"/>
    <property type="match status" value="1"/>
</dbReference>
<dbReference type="FunFam" id="3.30.1370.10:FF:000001">
    <property type="entry name" value="Polyribonucleotide nucleotidyltransferase"/>
    <property type="match status" value="1"/>
</dbReference>
<dbReference type="FunFam" id="3.30.230.70:FF:000001">
    <property type="entry name" value="Polyribonucleotide nucleotidyltransferase"/>
    <property type="match status" value="1"/>
</dbReference>
<dbReference type="FunFam" id="3.30.230.70:FF:000002">
    <property type="entry name" value="Polyribonucleotide nucleotidyltransferase"/>
    <property type="match status" value="1"/>
</dbReference>
<dbReference type="Gene3D" id="3.30.230.70">
    <property type="entry name" value="GHMP Kinase, N-terminal domain"/>
    <property type="match status" value="2"/>
</dbReference>
<dbReference type="Gene3D" id="3.30.1370.10">
    <property type="entry name" value="K Homology domain, type 1"/>
    <property type="match status" value="1"/>
</dbReference>
<dbReference type="Gene3D" id="2.40.50.140">
    <property type="entry name" value="Nucleic acid-binding proteins"/>
    <property type="match status" value="1"/>
</dbReference>
<dbReference type="HAMAP" id="MF_01595">
    <property type="entry name" value="PNPase"/>
    <property type="match status" value="1"/>
</dbReference>
<dbReference type="InterPro" id="IPR001247">
    <property type="entry name" value="ExoRNase_PH_dom1"/>
</dbReference>
<dbReference type="InterPro" id="IPR015847">
    <property type="entry name" value="ExoRNase_PH_dom2"/>
</dbReference>
<dbReference type="InterPro" id="IPR036345">
    <property type="entry name" value="ExoRNase_PH_dom2_sf"/>
</dbReference>
<dbReference type="InterPro" id="IPR004087">
    <property type="entry name" value="KH_dom"/>
</dbReference>
<dbReference type="InterPro" id="IPR004088">
    <property type="entry name" value="KH_dom_type_1"/>
</dbReference>
<dbReference type="InterPro" id="IPR036612">
    <property type="entry name" value="KH_dom_type_1_sf"/>
</dbReference>
<dbReference type="InterPro" id="IPR012340">
    <property type="entry name" value="NA-bd_OB-fold"/>
</dbReference>
<dbReference type="InterPro" id="IPR012162">
    <property type="entry name" value="PNPase"/>
</dbReference>
<dbReference type="InterPro" id="IPR027408">
    <property type="entry name" value="PNPase/RNase_PH_dom_sf"/>
</dbReference>
<dbReference type="InterPro" id="IPR015848">
    <property type="entry name" value="PNPase_PH_RNA-bd_bac/org-type"/>
</dbReference>
<dbReference type="InterPro" id="IPR020568">
    <property type="entry name" value="Ribosomal_Su5_D2-typ_SF"/>
</dbReference>
<dbReference type="InterPro" id="IPR003029">
    <property type="entry name" value="S1_domain"/>
</dbReference>
<dbReference type="NCBIfam" id="TIGR03591">
    <property type="entry name" value="polynuc_phos"/>
    <property type="match status" value="1"/>
</dbReference>
<dbReference type="NCBIfam" id="NF008805">
    <property type="entry name" value="PRK11824.1"/>
    <property type="match status" value="1"/>
</dbReference>
<dbReference type="PANTHER" id="PTHR11252">
    <property type="entry name" value="POLYRIBONUCLEOTIDE NUCLEOTIDYLTRANSFERASE"/>
    <property type="match status" value="1"/>
</dbReference>
<dbReference type="PANTHER" id="PTHR11252:SF0">
    <property type="entry name" value="POLYRIBONUCLEOTIDE NUCLEOTIDYLTRANSFERASE 1, MITOCHONDRIAL"/>
    <property type="match status" value="1"/>
</dbReference>
<dbReference type="Pfam" id="PF00013">
    <property type="entry name" value="KH_1"/>
    <property type="match status" value="1"/>
</dbReference>
<dbReference type="Pfam" id="PF03726">
    <property type="entry name" value="PNPase"/>
    <property type="match status" value="1"/>
</dbReference>
<dbReference type="Pfam" id="PF01138">
    <property type="entry name" value="RNase_PH"/>
    <property type="match status" value="2"/>
</dbReference>
<dbReference type="Pfam" id="PF03725">
    <property type="entry name" value="RNase_PH_C"/>
    <property type="match status" value="1"/>
</dbReference>
<dbReference type="Pfam" id="PF00575">
    <property type="entry name" value="S1"/>
    <property type="match status" value="1"/>
</dbReference>
<dbReference type="PIRSF" id="PIRSF005499">
    <property type="entry name" value="PNPase"/>
    <property type="match status" value="1"/>
</dbReference>
<dbReference type="SMART" id="SM00322">
    <property type="entry name" value="KH"/>
    <property type="match status" value="1"/>
</dbReference>
<dbReference type="SMART" id="SM00316">
    <property type="entry name" value="S1"/>
    <property type="match status" value="1"/>
</dbReference>
<dbReference type="SUPFAM" id="SSF54791">
    <property type="entry name" value="Eukaryotic type KH-domain (KH-domain type I)"/>
    <property type="match status" value="1"/>
</dbReference>
<dbReference type="SUPFAM" id="SSF50249">
    <property type="entry name" value="Nucleic acid-binding proteins"/>
    <property type="match status" value="1"/>
</dbReference>
<dbReference type="SUPFAM" id="SSF55666">
    <property type="entry name" value="Ribonuclease PH domain 2-like"/>
    <property type="match status" value="2"/>
</dbReference>
<dbReference type="SUPFAM" id="SSF54211">
    <property type="entry name" value="Ribosomal protein S5 domain 2-like"/>
    <property type="match status" value="2"/>
</dbReference>
<dbReference type="PROSITE" id="PS50084">
    <property type="entry name" value="KH_TYPE_1"/>
    <property type="match status" value="1"/>
</dbReference>
<dbReference type="PROSITE" id="PS50126">
    <property type="entry name" value="S1"/>
    <property type="match status" value="1"/>
</dbReference>
<comment type="function">
    <text evidence="1">Involved in mRNA degradation. Catalyzes the phosphorolysis of single-stranded polyribonucleotides processively in the 3'- to 5'-direction.</text>
</comment>
<comment type="catalytic activity">
    <reaction evidence="1">
        <text>RNA(n+1) + phosphate = RNA(n) + a ribonucleoside 5'-diphosphate</text>
        <dbReference type="Rhea" id="RHEA:22096"/>
        <dbReference type="Rhea" id="RHEA-COMP:14527"/>
        <dbReference type="Rhea" id="RHEA-COMP:17342"/>
        <dbReference type="ChEBI" id="CHEBI:43474"/>
        <dbReference type="ChEBI" id="CHEBI:57930"/>
        <dbReference type="ChEBI" id="CHEBI:140395"/>
        <dbReference type="EC" id="2.7.7.8"/>
    </reaction>
</comment>
<comment type="cofactor">
    <cofactor evidence="1">
        <name>Mg(2+)</name>
        <dbReference type="ChEBI" id="CHEBI:18420"/>
    </cofactor>
</comment>
<comment type="subcellular location">
    <subcellularLocation>
        <location evidence="1">Cytoplasm</location>
    </subcellularLocation>
</comment>
<comment type="similarity">
    <text evidence="1">Belongs to the polyribonucleotide nucleotidyltransferase family.</text>
</comment>
<sequence length="722" mass="78704">MQGQTTTVSFDGREIRLTTGRYAPQAGGSVLIECGDTAVLVTATQSPGREGADFLPLICDYEERLYAAGRIPGSFMRREGRPPERATLISRLIDRPLRPLFPSWMRDDIQVVATCLSLDERVPSDVLAVTASSMATLLAEIPFYGPMAAVRVGLLGDDFVLNPSFREIERGDLDLVVAGTPDGVVMIEAGANQLSEQDVIEAVDFGYEAVTELIKAQQSILKESGIDHKKPDEQEIDETLPNYLDKNGRKPIGELLKKFELTKKERDLKLEEIKTNLGEKIDSLKEDNAVKKAISSNPKLLTTSFKSLTKKLMREQIIKDGKRVDGRALDEVRKIEAAAGILPKRVHGSGLFQRGLTQVLSTATLGTPSDAQEMDDLNPSSDKTYIHHYNFPPYSVGETRPMRTPGRREVGHGALAERALIPVLPPKESFPYVLRVVSEVLSSNGSTSMGSVCGSTIALLDAGVPLKAPVSGAAMGLIKEGKEIRILTDIQGIEDFLGDMDFKVAGTEKGITALQMDMKVTGLEVKTIADAINQAKPARTHILEKMNETIDKPRETLSPHAPRLLSFRIDPELIGTVIGPGGRTIKGITERTNTKIDIEDGGIVTIASHDGVAAEEAQKIIEGLTRKVHEGEIFTGSITRIIPIGAFVEILPGKEGMIHISQLSEARVEKVEDVVKVGDEVTVRVREIDNRGRINLTLRGVSQNNNDMNYPQPTPTPVAPLN</sequence>
<feature type="chain" id="PRO_1000192483" description="Polyribonucleotide nucleotidyltransferase">
    <location>
        <begin position="1"/>
        <end position="722"/>
    </location>
</feature>
<feature type="domain" description="KH" evidence="1">
    <location>
        <begin position="562"/>
        <end position="621"/>
    </location>
</feature>
<feature type="domain" description="S1 motif" evidence="1">
    <location>
        <begin position="631"/>
        <end position="699"/>
    </location>
</feature>
<feature type="region of interest" description="Disordered" evidence="2">
    <location>
        <begin position="701"/>
        <end position="722"/>
    </location>
</feature>
<feature type="compositionally biased region" description="Polar residues" evidence="2">
    <location>
        <begin position="701"/>
        <end position="711"/>
    </location>
</feature>
<feature type="compositionally biased region" description="Pro residues" evidence="2">
    <location>
        <begin position="712"/>
        <end position="722"/>
    </location>
</feature>
<feature type="binding site" evidence="1">
    <location>
        <position position="495"/>
    </location>
    <ligand>
        <name>Mg(2+)</name>
        <dbReference type="ChEBI" id="CHEBI:18420"/>
    </ligand>
</feature>
<feature type="binding site" evidence="1">
    <location>
        <position position="501"/>
    </location>
    <ligand>
        <name>Mg(2+)</name>
        <dbReference type="ChEBI" id="CHEBI:18420"/>
    </ligand>
</feature>